<organism>
    <name type="scientific">Salmonella phage P22</name>
    <name type="common">Bacteriophage P22</name>
    <dbReference type="NCBI Taxonomy" id="10754"/>
    <lineage>
        <taxon>Viruses</taxon>
        <taxon>Duplodnaviria</taxon>
        <taxon>Heunggongvirae</taxon>
        <taxon>Uroviricota</taxon>
        <taxon>Caudoviricetes</taxon>
        <taxon>Lederbergvirus</taxon>
    </lineage>
</organism>
<organismHost>
    <name type="scientific">Salmonella typhimurium</name>
    <dbReference type="NCBI Taxonomy" id="90371"/>
</organismHost>
<feature type="chain" id="PRO_0000077613" description="Protein ninD">
    <location>
        <begin position="1"/>
        <end position="57"/>
    </location>
</feature>
<feature type="sequence conflict" description="In Ref. 1 and 2." evidence="1" ref="1 2">
    <original>C</original>
    <variation>F</variation>
    <location>
        <position position="4"/>
    </location>
</feature>
<accession>Q38663</accession>
<accession>Q7PCE5</accession>
<proteinExistence type="inferred from homology"/>
<comment type="similarity">
    <text evidence="1">Belongs to the ninD family.</text>
</comment>
<sequence>MKHCYRCGESKDDYRFRPNQPYWHQWCIRCERSPVGNFPLPETKEDVWHDSDEVSPT</sequence>
<gene>
    <name type="primary">ninD</name>
</gene>
<evidence type="ECO:0000305" key="1"/>
<reference key="1">
    <citation type="submission" date="1994-05" db="EMBL/GenBank/DDBJ databases">
        <title>Nucleotide sequence of PR-operon of P22 is a mosaic of other lambdoid chromosomes and reveals functional implications for the late gene expression.</title>
        <authorList>
            <person name="Kroeger M."/>
            <person name="Hobom G."/>
        </authorList>
    </citation>
    <scope>NUCLEOTIDE SEQUENCE [GENOMIC DNA]</scope>
</reference>
<reference key="2">
    <citation type="journal article" date="2000" name="J. Bacteriol.">
        <title>Sequence of the genome of Salmonella bacteriophage P22.</title>
        <authorList>
            <person name="Vander Byl C.S."/>
            <person name="Kropinski A.M.B."/>
        </authorList>
    </citation>
    <scope>NUCLEOTIDE SEQUENCE [LARGE SCALE GENOMIC DNA]</scope>
</reference>
<reference key="3">
    <citation type="journal article" date="2003" name="J. Bacteriol.">
        <title>Corrected sequence of the bacteriophage P22 genome.</title>
        <authorList>
            <person name="Pedulla M.L."/>
            <person name="Ford M.E."/>
            <person name="Karthikeyan T."/>
            <person name="Houtz J.M."/>
            <person name="Hendrix R.W."/>
            <person name="Hatfull G.F."/>
            <person name="Poteete A.R."/>
            <person name="Gilcrease E.B."/>
            <person name="Winn-Stapley D.A."/>
            <person name="Casjens S.R."/>
        </authorList>
    </citation>
    <scope>NUCLEOTIDE SEQUENCE [LARGE SCALE GENOMIC DNA]</scope>
</reference>
<protein>
    <recommendedName>
        <fullName>Protein ninD</fullName>
    </recommendedName>
</protein>
<name>NIND_BPP22</name>
<dbReference type="EMBL" id="X78401">
    <property type="protein sequence ID" value="CAA55159.1"/>
    <property type="molecule type" value="Genomic_DNA"/>
</dbReference>
<dbReference type="EMBL" id="AF217253">
    <property type="protein sequence ID" value="AAF75031.1"/>
    <property type="molecule type" value="Genomic_DNA"/>
</dbReference>
<dbReference type="EMBL" id="BK000583">
    <property type="protein sequence ID" value="DAA01029.1"/>
    <property type="molecule type" value="Genomic_DNA"/>
</dbReference>
<dbReference type="RefSeq" id="YP_063726.1">
    <property type="nucleotide sequence ID" value="NC_002371.2"/>
</dbReference>
<dbReference type="SMR" id="Q38663"/>
<dbReference type="GeneID" id="2944231"/>
<dbReference type="KEGG" id="vg:2944231"/>
<dbReference type="OrthoDB" id="22740at10239"/>
<dbReference type="Proteomes" id="UP000001795">
    <property type="component" value="Segment"/>
</dbReference>
<dbReference type="Proteomes" id="UP000007960">
    <property type="component" value="Segment"/>
</dbReference>
<dbReference type="InterPro" id="IPR035346">
    <property type="entry name" value="NinD"/>
</dbReference>
<dbReference type="Pfam" id="PF17466">
    <property type="entry name" value="NinD"/>
    <property type="match status" value="1"/>
</dbReference>
<keyword id="KW-1185">Reference proteome</keyword>